<gene>
    <name evidence="1" type="primary">psaB</name>
</gene>
<name>PSAB_SOYBN</name>
<keyword id="KW-0004">4Fe-4S</keyword>
<keyword id="KW-0148">Chlorophyll</keyword>
<keyword id="KW-0150">Chloroplast</keyword>
<keyword id="KW-0157">Chromophore</keyword>
<keyword id="KW-0249">Electron transport</keyword>
<keyword id="KW-0408">Iron</keyword>
<keyword id="KW-0411">Iron-sulfur</keyword>
<keyword id="KW-0460">Magnesium</keyword>
<keyword id="KW-0472">Membrane</keyword>
<keyword id="KW-0479">Metal-binding</keyword>
<keyword id="KW-0560">Oxidoreductase</keyword>
<keyword id="KW-0602">Photosynthesis</keyword>
<keyword id="KW-0603">Photosystem I</keyword>
<keyword id="KW-0934">Plastid</keyword>
<keyword id="KW-1185">Reference proteome</keyword>
<keyword id="KW-0793">Thylakoid</keyword>
<keyword id="KW-0812">Transmembrane</keyword>
<keyword id="KW-1133">Transmembrane helix</keyword>
<keyword id="KW-0813">Transport</keyword>
<protein>
    <recommendedName>
        <fullName evidence="1">Photosystem I P700 chlorophyll a apoprotein A2</fullName>
        <ecNumber evidence="1">1.97.1.12</ecNumber>
    </recommendedName>
    <alternativeName>
        <fullName evidence="1">PSI-B</fullName>
    </alternativeName>
    <alternativeName>
        <fullName evidence="1">PsaB</fullName>
    </alternativeName>
</protein>
<feature type="chain" id="PRO_0000277114" description="Photosystem I P700 chlorophyll a apoprotein A2">
    <location>
        <begin position="1"/>
        <end position="734"/>
    </location>
</feature>
<feature type="transmembrane region" description="Helical; Name=I" evidence="1">
    <location>
        <begin position="46"/>
        <end position="69"/>
    </location>
</feature>
<feature type="transmembrane region" description="Helical; Name=II" evidence="1">
    <location>
        <begin position="135"/>
        <end position="158"/>
    </location>
</feature>
<feature type="transmembrane region" description="Helical; Name=III" evidence="1">
    <location>
        <begin position="175"/>
        <end position="199"/>
    </location>
</feature>
<feature type="transmembrane region" description="Helical; Name=IV" evidence="1">
    <location>
        <begin position="273"/>
        <end position="291"/>
    </location>
</feature>
<feature type="transmembrane region" description="Helical; Name=V" evidence="1">
    <location>
        <begin position="330"/>
        <end position="353"/>
    </location>
</feature>
<feature type="transmembrane region" description="Helical; Name=VI" evidence="1">
    <location>
        <begin position="369"/>
        <end position="395"/>
    </location>
</feature>
<feature type="transmembrane region" description="Helical; Name=VII" evidence="1">
    <location>
        <begin position="417"/>
        <end position="439"/>
    </location>
</feature>
<feature type="transmembrane region" description="Helical; Name=VIII" evidence="1">
    <location>
        <begin position="517"/>
        <end position="535"/>
    </location>
</feature>
<feature type="transmembrane region" description="Helical; Name=IX" evidence="1">
    <location>
        <begin position="575"/>
        <end position="596"/>
    </location>
</feature>
<feature type="transmembrane region" description="Helical; Name=X" evidence="1">
    <location>
        <begin position="643"/>
        <end position="665"/>
    </location>
</feature>
<feature type="transmembrane region" description="Helical; Name=XI" evidence="1">
    <location>
        <begin position="707"/>
        <end position="727"/>
    </location>
</feature>
<feature type="binding site" evidence="1">
    <location>
        <position position="559"/>
    </location>
    <ligand>
        <name>[4Fe-4S] cluster</name>
        <dbReference type="ChEBI" id="CHEBI:49883"/>
        <note>ligand shared between dimeric partners</note>
    </ligand>
</feature>
<feature type="binding site" evidence="1">
    <location>
        <position position="568"/>
    </location>
    <ligand>
        <name>[4Fe-4S] cluster</name>
        <dbReference type="ChEBI" id="CHEBI:49883"/>
        <note>ligand shared between dimeric partners</note>
    </ligand>
</feature>
<feature type="binding site" description="axial binding residue" evidence="1">
    <location>
        <position position="654"/>
    </location>
    <ligand>
        <name>chlorophyll a</name>
        <dbReference type="ChEBI" id="CHEBI:58416"/>
        <label>B1</label>
    </ligand>
    <ligandPart>
        <name>Mg</name>
        <dbReference type="ChEBI" id="CHEBI:25107"/>
    </ligandPart>
</feature>
<feature type="binding site" description="axial binding residue" evidence="1">
    <location>
        <position position="662"/>
    </location>
    <ligand>
        <name>chlorophyll a</name>
        <dbReference type="ChEBI" id="CHEBI:58416"/>
        <label>B3</label>
    </ligand>
    <ligandPart>
        <name>Mg</name>
        <dbReference type="ChEBI" id="CHEBI:25107"/>
    </ligandPart>
</feature>
<feature type="binding site" evidence="1">
    <location>
        <position position="670"/>
    </location>
    <ligand>
        <name>chlorophyll a</name>
        <dbReference type="ChEBI" id="CHEBI:58416"/>
        <label>B3</label>
    </ligand>
</feature>
<feature type="binding site" evidence="1">
    <location>
        <position position="671"/>
    </location>
    <ligand>
        <name>phylloquinone</name>
        <dbReference type="ChEBI" id="CHEBI:18067"/>
        <label>B</label>
    </ligand>
</feature>
<accession>Q2PMU2</accession>
<organism>
    <name type="scientific">Glycine max</name>
    <name type="common">Soybean</name>
    <name type="synonym">Glycine hispida</name>
    <dbReference type="NCBI Taxonomy" id="3847"/>
    <lineage>
        <taxon>Eukaryota</taxon>
        <taxon>Viridiplantae</taxon>
        <taxon>Streptophyta</taxon>
        <taxon>Embryophyta</taxon>
        <taxon>Tracheophyta</taxon>
        <taxon>Spermatophyta</taxon>
        <taxon>Magnoliopsida</taxon>
        <taxon>eudicotyledons</taxon>
        <taxon>Gunneridae</taxon>
        <taxon>Pentapetalae</taxon>
        <taxon>rosids</taxon>
        <taxon>fabids</taxon>
        <taxon>Fabales</taxon>
        <taxon>Fabaceae</taxon>
        <taxon>Papilionoideae</taxon>
        <taxon>50 kb inversion clade</taxon>
        <taxon>NPAAA clade</taxon>
        <taxon>indigoferoid/millettioid clade</taxon>
        <taxon>Phaseoleae</taxon>
        <taxon>Glycine</taxon>
        <taxon>Glycine subgen. Soja</taxon>
    </lineage>
</organism>
<dbReference type="EC" id="1.97.1.12" evidence="1"/>
<dbReference type="EMBL" id="DQ317523">
    <property type="protein sequence ID" value="ABC25116.1"/>
    <property type="molecule type" value="Genomic_DNA"/>
</dbReference>
<dbReference type="RefSeq" id="YP_538756.1">
    <property type="nucleotide sequence ID" value="NC_007942.1"/>
</dbReference>
<dbReference type="SMR" id="Q2PMU2"/>
<dbReference type="FunCoup" id="Q2PMU2">
    <property type="interactions" value="557"/>
</dbReference>
<dbReference type="STRING" id="3847.Q2PMU2"/>
<dbReference type="PaxDb" id="3847-GLYMA15G39361.1"/>
<dbReference type="GeneID" id="3989267"/>
<dbReference type="KEGG" id="gmx:3989267"/>
<dbReference type="eggNOG" id="ENOG502QRYE">
    <property type="taxonomic scope" value="Eukaryota"/>
</dbReference>
<dbReference type="InParanoid" id="Q2PMU2"/>
<dbReference type="Proteomes" id="UP000008827">
    <property type="component" value="Chloroplast"/>
</dbReference>
<dbReference type="GO" id="GO:0009535">
    <property type="term" value="C:chloroplast thylakoid membrane"/>
    <property type="evidence" value="ECO:0007669"/>
    <property type="project" value="UniProtKB-SubCell"/>
</dbReference>
<dbReference type="GO" id="GO:0009522">
    <property type="term" value="C:photosystem I"/>
    <property type="evidence" value="ECO:0007669"/>
    <property type="project" value="UniProtKB-KW"/>
</dbReference>
<dbReference type="GO" id="GO:0051539">
    <property type="term" value="F:4 iron, 4 sulfur cluster binding"/>
    <property type="evidence" value="ECO:0007669"/>
    <property type="project" value="UniProtKB-KW"/>
</dbReference>
<dbReference type="GO" id="GO:0016168">
    <property type="term" value="F:chlorophyll binding"/>
    <property type="evidence" value="ECO:0007669"/>
    <property type="project" value="UniProtKB-KW"/>
</dbReference>
<dbReference type="GO" id="GO:0009055">
    <property type="term" value="F:electron transfer activity"/>
    <property type="evidence" value="ECO:0007669"/>
    <property type="project" value="UniProtKB-UniRule"/>
</dbReference>
<dbReference type="GO" id="GO:0000287">
    <property type="term" value="F:magnesium ion binding"/>
    <property type="evidence" value="ECO:0007669"/>
    <property type="project" value="UniProtKB-UniRule"/>
</dbReference>
<dbReference type="GO" id="GO:0016491">
    <property type="term" value="F:oxidoreductase activity"/>
    <property type="evidence" value="ECO:0007669"/>
    <property type="project" value="UniProtKB-KW"/>
</dbReference>
<dbReference type="GO" id="GO:0015979">
    <property type="term" value="P:photosynthesis"/>
    <property type="evidence" value="ECO:0007669"/>
    <property type="project" value="UniProtKB-UniRule"/>
</dbReference>
<dbReference type="FunFam" id="1.20.1130.10:FF:000001">
    <property type="entry name" value="Photosystem I P700 chlorophyll a apoprotein A2"/>
    <property type="match status" value="1"/>
</dbReference>
<dbReference type="Gene3D" id="1.20.1130.10">
    <property type="entry name" value="Photosystem I PsaA/PsaB"/>
    <property type="match status" value="1"/>
</dbReference>
<dbReference type="HAMAP" id="MF_00482">
    <property type="entry name" value="PSI_PsaB"/>
    <property type="match status" value="1"/>
</dbReference>
<dbReference type="InterPro" id="IPR001280">
    <property type="entry name" value="PSI_PsaA/B"/>
</dbReference>
<dbReference type="InterPro" id="IPR020586">
    <property type="entry name" value="PSI_PsaA/B_CS"/>
</dbReference>
<dbReference type="InterPro" id="IPR036408">
    <property type="entry name" value="PSI_PsaA/B_sf"/>
</dbReference>
<dbReference type="InterPro" id="IPR006244">
    <property type="entry name" value="PSI_PsaB"/>
</dbReference>
<dbReference type="NCBIfam" id="TIGR01336">
    <property type="entry name" value="psaB"/>
    <property type="match status" value="1"/>
</dbReference>
<dbReference type="PANTHER" id="PTHR30128">
    <property type="entry name" value="OUTER MEMBRANE PROTEIN, OMPA-RELATED"/>
    <property type="match status" value="1"/>
</dbReference>
<dbReference type="PANTHER" id="PTHR30128:SF19">
    <property type="entry name" value="PHOTOSYSTEM I P700 CHLOROPHYLL A APOPROTEIN A1-RELATED"/>
    <property type="match status" value="1"/>
</dbReference>
<dbReference type="Pfam" id="PF00223">
    <property type="entry name" value="PsaA_PsaB"/>
    <property type="match status" value="1"/>
</dbReference>
<dbReference type="PIRSF" id="PIRSF002905">
    <property type="entry name" value="PSI_A"/>
    <property type="match status" value="1"/>
</dbReference>
<dbReference type="PRINTS" id="PR00257">
    <property type="entry name" value="PHOTSYSPSAAB"/>
</dbReference>
<dbReference type="SUPFAM" id="SSF81558">
    <property type="entry name" value="Photosystem I subunits PsaA/PsaB"/>
    <property type="match status" value="1"/>
</dbReference>
<dbReference type="PROSITE" id="PS00419">
    <property type="entry name" value="PHOTOSYSTEM_I_PSAAB"/>
    <property type="match status" value="1"/>
</dbReference>
<evidence type="ECO:0000255" key="1">
    <source>
        <dbReference type="HAMAP-Rule" id="MF_00482"/>
    </source>
</evidence>
<geneLocation type="chloroplast"/>
<reference key="1">
    <citation type="journal article" date="2005" name="Plant Mol. Biol.">
        <title>Complete chloroplast genome sequence of Glycine max and comparative analyses with other legume genomes.</title>
        <authorList>
            <person name="Saski C."/>
            <person name="Lee S.-B."/>
            <person name="Daniell H."/>
            <person name="Wood T.C."/>
            <person name="Tomkins J."/>
            <person name="Kim H.-G."/>
            <person name="Jansen R.K."/>
        </authorList>
    </citation>
    <scope>NUCLEOTIDE SEQUENCE [LARGE SCALE GENOMIC DNA]</scope>
    <source>
        <strain>cv. PI 437654</strain>
    </source>
</reference>
<proteinExistence type="inferred from homology"/>
<sequence length="734" mass="82418">MALRFPRFSQGLAQDPTTRRIWFGIATAHDFESHDDITEERLYQNIFASHFGQLAIIFLWTSGNLFHVAWQGNFEAWVQDPLHVRPIAHAIWDPHFGQPAVEAFTRGGALGPVNIAYSGVYQWWYTIGLRTNGDLYTGALFLLFLSTISLIAGWLHLQPKWKPSVSWFKNAESRLNHHLSGLFGVSSLAWTGHLVHVAIPGSRGEYVRWNNLLSILPHPEGLGPFFTGQWNLYAQNPDSNSHIFGTPQGAGTAILTLLGGFHPQTQSLWLTDIAHHHLAIAFLFLVAGHMYRTNFGIGHSIKDLLEAHTPPGGRLGRGHKGLYDTINNSIHFQLGLALASLGVITSLVAQHMYSLPAYAFIAQDFTTQAALYTHHQYIAGFIMTGAFAHGAIFFIRDYNPEQNEDNVLARMLDHKEAIISHLSWASLFLGFHTLGLYVHNDVMLAFGTPEKQILIEPIFAQWIQSAHGKTSYGFDILLSSTNSPAFNAGRSIWLPGWLNAVNENSNSLFLTIGPGDFLVHHAIALGLHTTTLILVKGALDARGSKLMPDKKDFGYSFPCDGPGRGGTCDISAWDAFYLAVFWMLNTIGWVTFYWHWKHITLWQGNVSQFNESSTYLMGWLRDYLWLNSSQLINGYNPFGMNSLSVWAWMFLFGHLVWATGFMFLISWRGYWQELIETLAWAHERTPLANLIRWRDKPVALSIVQARLVGLAHFSVGYIFTYAAFLIASTSGKFG</sequence>
<comment type="function">
    <text evidence="1">PsaA and PsaB bind P700, the primary electron donor of photosystem I (PSI), as well as the electron acceptors A0, A1 and FX. PSI is a plastocyanin-ferredoxin oxidoreductase, converting photonic excitation into a charge separation, which transfers an electron from the donor P700 chlorophyll pair to the spectroscopically characterized acceptors A0, A1, FX, FA and FB in turn. Oxidized P700 is reduced on the lumenal side of the thylakoid membrane by plastocyanin.</text>
</comment>
<comment type="catalytic activity">
    <reaction evidence="1">
        <text>reduced [plastocyanin] + hnu + oxidized [2Fe-2S]-[ferredoxin] = oxidized [plastocyanin] + reduced [2Fe-2S]-[ferredoxin]</text>
        <dbReference type="Rhea" id="RHEA:30407"/>
        <dbReference type="Rhea" id="RHEA-COMP:10000"/>
        <dbReference type="Rhea" id="RHEA-COMP:10001"/>
        <dbReference type="Rhea" id="RHEA-COMP:10039"/>
        <dbReference type="Rhea" id="RHEA-COMP:10040"/>
        <dbReference type="ChEBI" id="CHEBI:29036"/>
        <dbReference type="ChEBI" id="CHEBI:30212"/>
        <dbReference type="ChEBI" id="CHEBI:33737"/>
        <dbReference type="ChEBI" id="CHEBI:33738"/>
        <dbReference type="ChEBI" id="CHEBI:49552"/>
        <dbReference type="EC" id="1.97.1.12"/>
    </reaction>
</comment>
<comment type="cofactor">
    <text evidence="1">P700 is a chlorophyll a/chlorophyll a' dimer, A0 is one or more chlorophyll a, A1 is one or both phylloquinones and FX is a shared 4Fe-4S iron-sulfur center.</text>
</comment>
<comment type="subunit">
    <text evidence="1">The PsaA/B heterodimer binds the P700 chlorophyll special pair and subsequent electron acceptors. PSI consists of a core antenna complex that captures photons, and an electron transfer chain that converts photonic excitation into a charge separation. The eukaryotic PSI reaction center is composed of at least 11 subunits.</text>
</comment>
<comment type="subcellular location">
    <subcellularLocation>
        <location>Plastid</location>
        <location>Chloroplast thylakoid membrane</location>
        <topology>Multi-pass membrane protein</topology>
    </subcellularLocation>
</comment>
<comment type="similarity">
    <text evidence="1">Belongs to the PsaA/PsaB family.</text>
</comment>